<name>MUD2_YEAST</name>
<sequence>MADEKRLEDLRSKIMESIGKSEKDVVPIENKRFNTDNAVIDTHFKRQKSDGELPKAPKSRNVSHSNNRGPSSIITMSTNRTTYEQTRAGPHRQSYRDASGRSYNRENRYSSHNTGPQWNNNPYNRQRDERRGRNERFDRRGRNGNGNYDRFNYQRKNEGSKFNGDRDKRQLQTNKYDMNYNSQNVMYPGSSFDSPAYYNMASSKANSRLVISGLSQSSDPSIVARLKDLLENFISGLQKTESNAEDFKISNFYIGEGRPDHIIVEFSSQICSTMVLACRSFFNAKLGTFDLKWRRPNDYVQQLDHLVDFCRGTVIALENLENIGEGEDYRMKELFSSLNVTNGTAKPLFYKCSSNTNNTGKESEFTKCILLSFEVVTQDILDKLKPYKWFKPNDGKISQVTSWITFQSLPNLVTQSVRVESRVLLLLNCLDPLDLKDETFITEIKETLKYSIAGADTIKICQPGVDYRLNFENLASGAGNIYIKFKTLEAAKHAMEELPGTQFNDRTVLCTYIDEDDFDMMEATQLS</sequence>
<accession>P36084</accession>
<accession>D6VXL2</accession>
<dbReference type="EMBL" id="U22449">
    <property type="protein sequence ID" value="AAA64215.1"/>
    <property type="molecule type" value="Genomic_DNA"/>
</dbReference>
<dbReference type="EMBL" id="X75780">
    <property type="protein sequence ID" value="CAA53400.1"/>
    <property type="molecule type" value="Genomic_DNA"/>
</dbReference>
<dbReference type="EMBL" id="Z28074">
    <property type="protein sequence ID" value="CAA81911.1"/>
    <property type="molecule type" value="Genomic_DNA"/>
</dbReference>
<dbReference type="EMBL" id="BK006944">
    <property type="protein sequence ID" value="DAA09082.1"/>
    <property type="molecule type" value="Genomic_DNA"/>
</dbReference>
<dbReference type="PIR" id="S37899">
    <property type="entry name" value="S37899"/>
</dbReference>
<dbReference type="RefSeq" id="NP_012849.1">
    <property type="nucleotide sequence ID" value="NM_001179640.1"/>
</dbReference>
<dbReference type="BioGRID" id="34057">
    <property type="interactions" value="403"/>
</dbReference>
<dbReference type="ComplexPortal" id="CPX-1417">
    <property type="entry name" value="BBP-MUD2 branchpoint-binding complex"/>
</dbReference>
<dbReference type="DIP" id="DIP-758N"/>
<dbReference type="FunCoup" id="P36084">
    <property type="interactions" value="230"/>
</dbReference>
<dbReference type="IntAct" id="P36084">
    <property type="interactions" value="12"/>
</dbReference>
<dbReference type="MINT" id="P36084"/>
<dbReference type="STRING" id="4932.YKL074C"/>
<dbReference type="iPTMnet" id="P36084"/>
<dbReference type="PaxDb" id="4932-YKL074C"/>
<dbReference type="PeptideAtlas" id="P36084"/>
<dbReference type="EnsemblFungi" id="YKL074C_mRNA">
    <property type="protein sequence ID" value="YKL074C"/>
    <property type="gene ID" value="YKL074C"/>
</dbReference>
<dbReference type="GeneID" id="853788"/>
<dbReference type="KEGG" id="sce:YKL074C"/>
<dbReference type="AGR" id="SGD:S000001557"/>
<dbReference type="SGD" id="S000001557">
    <property type="gene designation" value="MUD2"/>
</dbReference>
<dbReference type="VEuPathDB" id="FungiDB:YKL074C"/>
<dbReference type="eggNOG" id="KOG0120">
    <property type="taxonomic scope" value="Eukaryota"/>
</dbReference>
<dbReference type="HOGENOM" id="CLU_033573_0_0_1"/>
<dbReference type="InParanoid" id="P36084"/>
<dbReference type="OMA" id="YKETHEG"/>
<dbReference type="OrthoDB" id="10266058at2759"/>
<dbReference type="BioCyc" id="YEAST:G3O-31870-MONOMER"/>
<dbReference type="BioGRID-ORCS" id="853788">
    <property type="hits" value="0 hits in 10 CRISPR screens"/>
</dbReference>
<dbReference type="PRO" id="PR:P36084"/>
<dbReference type="Proteomes" id="UP000002311">
    <property type="component" value="Chromosome XI"/>
</dbReference>
<dbReference type="RNAct" id="P36084">
    <property type="molecule type" value="protein"/>
</dbReference>
<dbReference type="GO" id="GO:0000243">
    <property type="term" value="C:commitment complex"/>
    <property type="evidence" value="ECO:0000314"/>
    <property type="project" value="SGD"/>
</dbReference>
<dbReference type="GO" id="GO:0016607">
    <property type="term" value="C:nuclear speck"/>
    <property type="evidence" value="ECO:0000318"/>
    <property type="project" value="GO_Central"/>
</dbReference>
<dbReference type="GO" id="GO:0005634">
    <property type="term" value="C:nucleus"/>
    <property type="evidence" value="ECO:0000303"/>
    <property type="project" value="ComplexPortal"/>
</dbReference>
<dbReference type="GO" id="GO:0071004">
    <property type="term" value="C:U2-type prespliceosome"/>
    <property type="evidence" value="ECO:0000318"/>
    <property type="project" value="GO_Central"/>
</dbReference>
<dbReference type="GO" id="GO:0089701">
    <property type="term" value="C:U2AF complex"/>
    <property type="evidence" value="ECO:0000318"/>
    <property type="project" value="GO_Central"/>
</dbReference>
<dbReference type="GO" id="GO:0003729">
    <property type="term" value="F:mRNA binding"/>
    <property type="evidence" value="ECO:0007005"/>
    <property type="project" value="SGD"/>
</dbReference>
<dbReference type="GO" id="GO:0008187">
    <property type="term" value="F:poly-pyrimidine tract binding"/>
    <property type="evidence" value="ECO:0000318"/>
    <property type="project" value="GO_Central"/>
</dbReference>
<dbReference type="GO" id="GO:0030628">
    <property type="term" value="F:pre-mRNA 3'-splice site binding"/>
    <property type="evidence" value="ECO:0000318"/>
    <property type="project" value="GO_Central"/>
</dbReference>
<dbReference type="GO" id="GO:0045131">
    <property type="term" value="F:pre-mRNA branch point binding"/>
    <property type="evidence" value="ECO:0000314"/>
    <property type="project" value="SGD"/>
</dbReference>
<dbReference type="GO" id="GO:0000348">
    <property type="term" value="P:mRNA branch site recognition"/>
    <property type="evidence" value="ECO:0000315"/>
    <property type="project" value="SGD"/>
</dbReference>
<dbReference type="GO" id="GO:0000398">
    <property type="term" value="P:mRNA splicing, via spliceosome"/>
    <property type="evidence" value="ECO:0000315"/>
    <property type="project" value="ComplexPortal"/>
</dbReference>
<dbReference type="GO" id="GO:0000245">
    <property type="term" value="P:spliceosomal complex assembly"/>
    <property type="evidence" value="ECO:0000318"/>
    <property type="project" value="GO_Central"/>
</dbReference>
<dbReference type="CDD" id="cd12232">
    <property type="entry name" value="RRM3_U2AF65"/>
    <property type="match status" value="1"/>
</dbReference>
<dbReference type="Gene3D" id="3.30.70.330">
    <property type="match status" value="1"/>
</dbReference>
<dbReference type="InterPro" id="IPR012677">
    <property type="entry name" value="Nucleotide-bd_a/b_plait_sf"/>
</dbReference>
<dbReference type="InterPro" id="IPR035979">
    <property type="entry name" value="RBD_domain_sf"/>
</dbReference>
<dbReference type="InterPro" id="IPR003954">
    <property type="entry name" value="RRM_dom_euk"/>
</dbReference>
<dbReference type="PANTHER" id="PTHR23139">
    <property type="entry name" value="RNA-BINDING PROTEIN"/>
    <property type="match status" value="1"/>
</dbReference>
<dbReference type="SMART" id="SM00361">
    <property type="entry name" value="RRM_1"/>
    <property type="match status" value="1"/>
</dbReference>
<dbReference type="SUPFAM" id="SSF54928">
    <property type="entry name" value="RNA-binding domain, RBD"/>
    <property type="match status" value="1"/>
</dbReference>
<proteinExistence type="evidence at protein level"/>
<organism>
    <name type="scientific">Saccharomyces cerevisiae (strain ATCC 204508 / S288c)</name>
    <name type="common">Baker's yeast</name>
    <dbReference type="NCBI Taxonomy" id="559292"/>
    <lineage>
        <taxon>Eukaryota</taxon>
        <taxon>Fungi</taxon>
        <taxon>Dikarya</taxon>
        <taxon>Ascomycota</taxon>
        <taxon>Saccharomycotina</taxon>
        <taxon>Saccharomycetes</taxon>
        <taxon>Saccharomycetales</taxon>
        <taxon>Saccharomycetaceae</taxon>
        <taxon>Saccharomyces</taxon>
    </lineage>
</organism>
<comment type="function">
    <text evidence="2">Splicing factor that contacts pre-mRNA directly and is a component of the pre-mRNA-U1 snRNP complex (commitment complex 2) that forms during early spliceosome assembly in yeast extracts.</text>
</comment>
<comment type="subunit">
    <text>MSL5, MUD2 and PRP40 interact to form the commitment complex 2 (CC2), a precursor of mature spliceosomes.</text>
</comment>
<comment type="interaction">
    <interactant intactId="EBI-11612">
        <id>P36084</id>
    </interactant>
    <interactant intactId="EBI-34012">
        <id>Q12186</id>
        <label>MSL5</label>
    </interactant>
    <organismsDiffer>false</organismsDiffer>
    <experiments>6</experiments>
</comment>
<comment type="miscellaneous">
    <text evidence="3">Present with 4170 molecules/cell in log phase SD medium.</text>
</comment>
<protein>
    <recommendedName>
        <fullName>Splicing factor MUD2</fullName>
    </recommendedName>
</protein>
<evidence type="ECO:0000256" key="1">
    <source>
        <dbReference type="SAM" id="MobiDB-lite"/>
    </source>
</evidence>
<evidence type="ECO:0000269" key="2">
    <source>
    </source>
</evidence>
<evidence type="ECO:0000269" key="3">
    <source>
    </source>
</evidence>
<evidence type="ECO:0000305" key="4"/>
<evidence type="ECO:0007744" key="5">
    <source>
    </source>
</evidence>
<reference key="1">
    <citation type="journal article" date="1994" name="Genes Dev.">
        <title>The yeast MUD2 protein: an interaction with PRP11 defines a bridge between commitment complexes and U2 snRNP addition.</title>
        <authorList>
            <person name="Abovich N."/>
            <person name="Liao X.C."/>
            <person name="Rosbash M."/>
        </authorList>
    </citation>
    <scope>NUCLEOTIDE SEQUENCE [GENOMIC DNA]</scope>
</reference>
<reference key="2">
    <citation type="journal article" date="1994" name="Nature">
        <title>Complete DNA sequence of yeast chromosome XI.</title>
        <authorList>
            <person name="Dujon B."/>
            <person name="Alexandraki D."/>
            <person name="Andre B."/>
            <person name="Ansorge W."/>
            <person name="Baladron V."/>
            <person name="Ballesta J.P.G."/>
            <person name="Banrevi A."/>
            <person name="Bolle P.-A."/>
            <person name="Bolotin-Fukuhara M."/>
            <person name="Bossier P."/>
            <person name="Bou G."/>
            <person name="Boyer J."/>
            <person name="Buitrago M.J."/>
            <person name="Cheret G."/>
            <person name="Colleaux L."/>
            <person name="Daignan-Fornier B."/>
            <person name="del Rey F."/>
            <person name="Dion C."/>
            <person name="Domdey H."/>
            <person name="Duesterhoeft A."/>
            <person name="Duesterhus S."/>
            <person name="Entian K.-D."/>
            <person name="Erfle H."/>
            <person name="Esteban P.F."/>
            <person name="Feldmann H."/>
            <person name="Fernandes L."/>
            <person name="Fobo G.M."/>
            <person name="Fritz C."/>
            <person name="Fukuhara H."/>
            <person name="Gabel C."/>
            <person name="Gaillon L."/>
            <person name="Garcia-Cantalejo J.M."/>
            <person name="Garcia-Ramirez J.J."/>
            <person name="Gent M.E."/>
            <person name="Ghazvini M."/>
            <person name="Goffeau A."/>
            <person name="Gonzalez A."/>
            <person name="Grothues D."/>
            <person name="Guerreiro P."/>
            <person name="Hegemann J.H."/>
            <person name="Hewitt N."/>
            <person name="Hilger F."/>
            <person name="Hollenberg C.P."/>
            <person name="Horaitis O."/>
            <person name="Indge K.J."/>
            <person name="Jacquier A."/>
            <person name="James C.M."/>
            <person name="Jauniaux J.-C."/>
            <person name="Jimenez A."/>
            <person name="Keuchel H."/>
            <person name="Kirchrath L."/>
            <person name="Kleine K."/>
            <person name="Koetter P."/>
            <person name="Legrain P."/>
            <person name="Liebl S."/>
            <person name="Louis E.J."/>
            <person name="Maia e Silva A."/>
            <person name="Marck C."/>
            <person name="Monnier A.-L."/>
            <person name="Moestl D."/>
            <person name="Mueller S."/>
            <person name="Obermaier B."/>
            <person name="Oliver S.G."/>
            <person name="Pallier C."/>
            <person name="Pascolo S."/>
            <person name="Pfeiffer F."/>
            <person name="Philippsen P."/>
            <person name="Planta R.J."/>
            <person name="Pohl F.M."/>
            <person name="Pohl T.M."/>
            <person name="Poehlmann R."/>
            <person name="Portetelle D."/>
            <person name="Purnelle B."/>
            <person name="Puzos V."/>
            <person name="Ramezani Rad M."/>
            <person name="Rasmussen S.W."/>
            <person name="Remacha M.A."/>
            <person name="Revuelta J.L."/>
            <person name="Richard G.-F."/>
            <person name="Rieger M."/>
            <person name="Rodrigues-Pousada C."/>
            <person name="Rose M."/>
            <person name="Rupp T."/>
            <person name="Santos M.A."/>
            <person name="Schwager C."/>
            <person name="Sensen C."/>
            <person name="Skala J."/>
            <person name="Soares H."/>
            <person name="Sor F."/>
            <person name="Stegemann J."/>
            <person name="Tettelin H."/>
            <person name="Thierry A."/>
            <person name="Tzermia M."/>
            <person name="Urrestarazu L.A."/>
            <person name="van Dyck L."/>
            <person name="van Vliet-Reedijk J.C."/>
            <person name="Valens M."/>
            <person name="Vandenbol M."/>
            <person name="Vilela C."/>
            <person name="Vissers S."/>
            <person name="von Wettstein D."/>
            <person name="Voss H."/>
            <person name="Wiemann S."/>
            <person name="Xu G."/>
            <person name="Zimmermann J."/>
            <person name="Haasemann M."/>
            <person name="Becker I."/>
            <person name="Mewes H.-W."/>
        </authorList>
    </citation>
    <scope>NUCLEOTIDE SEQUENCE [LARGE SCALE GENOMIC DNA]</scope>
    <source>
        <strain>ATCC 204508 / S288c</strain>
    </source>
</reference>
<reference key="3">
    <citation type="journal article" date="2014" name="G3 (Bethesda)">
        <title>The reference genome sequence of Saccharomyces cerevisiae: Then and now.</title>
        <authorList>
            <person name="Engel S.R."/>
            <person name="Dietrich F.S."/>
            <person name="Fisk D.G."/>
            <person name="Binkley G."/>
            <person name="Balakrishnan R."/>
            <person name="Costanzo M.C."/>
            <person name="Dwight S.S."/>
            <person name="Hitz B.C."/>
            <person name="Karra K."/>
            <person name="Nash R.S."/>
            <person name="Weng S."/>
            <person name="Wong E.D."/>
            <person name="Lloyd P."/>
            <person name="Skrzypek M.S."/>
            <person name="Miyasato S.R."/>
            <person name="Simison M."/>
            <person name="Cherry J.M."/>
        </authorList>
    </citation>
    <scope>GENOME REANNOTATION</scope>
    <source>
        <strain>ATCC 204508 / S288c</strain>
    </source>
</reference>
<reference key="4">
    <citation type="journal article" date="1994" name="Yeast">
        <title>Sequence of a 20.7 kb region of yeast chromosome XI includes the NUP100 gene, an open reading frame (ORF) possibly representing a nucleoside diphosphate kinase gene, tRNAs for His, Val and Trp in addition to seven ORFs with weak or no significant similarity to known proteins.</title>
        <authorList>
            <person name="Rasmussen S.W."/>
        </authorList>
    </citation>
    <scope>NUCLEOTIDE SEQUENCE [GENOMIC DNA] OF 1-365</scope>
    <source>
        <strain>ATCC 204508 / S288c</strain>
    </source>
</reference>
<reference key="5">
    <citation type="journal article" date="1997" name="Cell">
        <title>Cross-intron bridging interactions in the yeast commitment complex are conserved in mammals.</title>
        <authorList>
            <person name="Abovich N."/>
            <person name="Rosbash M."/>
        </authorList>
    </citation>
    <scope>INTERACTION WITH MSL5 AND PRP40</scope>
</reference>
<reference key="6">
    <citation type="journal article" date="1999" name="RNA">
        <title>Transient interaction of BBP/ScSF1 and Mud2 with the splicing machinery affects the kinetics of spliceosome assembly.</title>
        <authorList>
            <person name="Rutz B."/>
            <person name="Seraphin B."/>
        </authorList>
    </citation>
    <scope>FUNCTION</scope>
    <scope>INTERACTION WITH MSL5</scope>
</reference>
<reference key="7">
    <citation type="journal article" date="2003" name="Nature">
        <title>Global analysis of protein expression in yeast.</title>
        <authorList>
            <person name="Ghaemmaghami S."/>
            <person name="Huh W.-K."/>
            <person name="Bower K."/>
            <person name="Howson R.W."/>
            <person name="Belle A."/>
            <person name="Dephoure N."/>
            <person name="O'Shea E.K."/>
            <person name="Weissman J.S."/>
        </authorList>
    </citation>
    <scope>LEVEL OF PROTEIN EXPRESSION [LARGE SCALE ANALYSIS]</scope>
</reference>
<reference key="8">
    <citation type="journal article" date="2007" name="Proc. Natl. Acad. Sci. U.S.A.">
        <title>Analysis of phosphorylation sites on proteins from Saccharomyces cerevisiae by electron transfer dissociation (ETD) mass spectrometry.</title>
        <authorList>
            <person name="Chi A."/>
            <person name="Huttenhower C."/>
            <person name="Geer L.Y."/>
            <person name="Coon J.J."/>
            <person name="Syka J.E.P."/>
            <person name="Bai D.L."/>
            <person name="Shabanowitz J."/>
            <person name="Burke D.J."/>
            <person name="Troyanskaya O.G."/>
            <person name="Hunt D.F."/>
        </authorList>
    </citation>
    <scope>PHOSPHORYLATION [LARGE SCALE ANALYSIS] AT SER-49</scope>
    <scope>IDENTIFICATION BY MASS SPECTROMETRY [LARGE SCALE ANALYSIS]</scope>
</reference>
<keyword id="KW-0507">mRNA processing</keyword>
<keyword id="KW-0508">mRNA splicing</keyword>
<keyword id="KW-0597">Phosphoprotein</keyword>
<keyword id="KW-1185">Reference proteome</keyword>
<keyword id="KW-0694">RNA-binding</keyword>
<gene>
    <name type="primary">MUD2</name>
    <name type="ordered locus">YKL074C</name>
    <name type="ORF">YKL358</name>
</gene>
<feature type="chain" id="PRO_0000081654" description="Splicing factor MUD2">
    <location>
        <begin position="1"/>
        <end position="527"/>
    </location>
</feature>
<feature type="domain" description="RRM">
    <location>
        <begin position="424"/>
        <end position="511"/>
    </location>
</feature>
<feature type="region of interest" description="Disordered" evidence="1">
    <location>
        <begin position="36"/>
        <end position="169"/>
    </location>
</feature>
<feature type="compositionally biased region" description="Basic and acidic residues" evidence="1">
    <location>
        <begin position="42"/>
        <end position="55"/>
    </location>
</feature>
<feature type="compositionally biased region" description="Polar residues" evidence="1">
    <location>
        <begin position="60"/>
        <end position="85"/>
    </location>
</feature>
<feature type="compositionally biased region" description="Basic and acidic residues" evidence="1">
    <location>
        <begin position="94"/>
        <end position="109"/>
    </location>
</feature>
<feature type="compositionally biased region" description="Polar residues" evidence="1">
    <location>
        <begin position="110"/>
        <end position="122"/>
    </location>
</feature>
<feature type="compositionally biased region" description="Basic and acidic residues" evidence="1">
    <location>
        <begin position="125"/>
        <end position="141"/>
    </location>
</feature>
<feature type="compositionally biased region" description="Basic and acidic residues" evidence="1">
    <location>
        <begin position="155"/>
        <end position="169"/>
    </location>
</feature>
<feature type="modified residue" description="Phosphoserine" evidence="5">
    <location>
        <position position="49"/>
    </location>
</feature>
<feature type="sequence conflict" description="In Ref. 1; AAA64215." evidence="4" ref="1">
    <original>A</original>
    <variation>R</variation>
    <location>
        <position position="98"/>
    </location>
</feature>